<accession>B7MLA1</accession>
<organism>
    <name type="scientific">Escherichia coli O45:K1 (strain S88 / ExPEC)</name>
    <dbReference type="NCBI Taxonomy" id="585035"/>
    <lineage>
        <taxon>Bacteria</taxon>
        <taxon>Pseudomonadati</taxon>
        <taxon>Pseudomonadota</taxon>
        <taxon>Gammaproteobacteria</taxon>
        <taxon>Enterobacterales</taxon>
        <taxon>Enterobacteriaceae</taxon>
        <taxon>Escherichia</taxon>
    </lineage>
</organism>
<feature type="chain" id="PRO_1000139440" description="CTP synthase">
    <location>
        <begin position="1"/>
        <end position="545"/>
    </location>
</feature>
<feature type="domain" description="Glutamine amidotransferase type-1" evidence="1">
    <location>
        <begin position="291"/>
        <end position="542"/>
    </location>
</feature>
<feature type="region of interest" description="Amidoligase domain" evidence="1">
    <location>
        <begin position="1"/>
        <end position="266"/>
    </location>
</feature>
<feature type="active site" description="Nucleophile; for glutamine hydrolysis" evidence="1">
    <location>
        <position position="379"/>
    </location>
</feature>
<feature type="active site" evidence="1">
    <location>
        <position position="515"/>
    </location>
</feature>
<feature type="active site" evidence="1">
    <location>
        <position position="517"/>
    </location>
</feature>
<feature type="binding site" evidence="1">
    <location>
        <position position="14"/>
    </location>
    <ligand>
        <name>CTP</name>
        <dbReference type="ChEBI" id="CHEBI:37563"/>
        <note>allosteric inhibitor</note>
    </ligand>
</feature>
<feature type="binding site" evidence="1">
    <location>
        <position position="14"/>
    </location>
    <ligand>
        <name>UTP</name>
        <dbReference type="ChEBI" id="CHEBI:46398"/>
    </ligand>
</feature>
<feature type="binding site" evidence="1">
    <location>
        <begin position="15"/>
        <end position="20"/>
    </location>
    <ligand>
        <name>ATP</name>
        <dbReference type="ChEBI" id="CHEBI:30616"/>
    </ligand>
</feature>
<feature type="binding site" evidence="1">
    <location>
        <position position="72"/>
    </location>
    <ligand>
        <name>ATP</name>
        <dbReference type="ChEBI" id="CHEBI:30616"/>
    </ligand>
</feature>
<feature type="binding site" evidence="1">
    <location>
        <position position="72"/>
    </location>
    <ligand>
        <name>Mg(2+)</name>
        <dbReference type="ChEBI" id="CHEBI:18420"/>
    </ligand>
</feature>
<feature type="binding site" evidence="1">
    <location>
        <position position="140"/>
    </location>
    <ligand>
        <name>Mg(2+)</name>
        <dbReference type="ChEBI" id="CHEBI:18420"/>
    </ligand>
</feature>
<feature type="binding site" evidence="1">
    <location>
        <begin position="147"/>
        <end position="149"/>
    </location>
    <ligand>
        <name>CTP</name>
        <dbReference type="ChEBI" id="CHEBI:37563"/>
        <note>allosteric inhibitor</note>
    </ligand>
</feature>
<feature type="binding site" evidence="1">
    <location>
        <begin position="187"/>
        <end position="192"/>
    </location>
    <ligand>
        <name>CTP</name>
        <dbReference type="ChEBI" id="CHEBI:37563"/>
        <note>allosteric inhibitor</note>
    </ligand>
</feature>
<feature type="binding site" evidence="1">
    <location>
        <begin position="187"/>
        <end position="192"/>
    </location>
    <ligand>
        <name>UTP</name>
        <dbReference type="ChEBI" id="CHEBI:46398"/>
    </ligand>
</feature>
<feature type="binding site" evidence="1">
    <location>
        <position position="223"/>
    </location>
    <ligand>
        <name>CTP</name>
        <dbReference type="ChEBI" id="CHEBI:37563"/>
        <note>allosteric inhibitor</note>
    </ligand>
</feature>
<feature type="binding site" evidence="1">
    <location>
        <position position="223"/>
    </location>
    <ligand>
        <name>UTP</name>
        <dbReference type="ChEBI" id="CHEBI:46398"/>
    </ligand>
</feature>
<feature type="binding site" evidence="1">
    <location>
        <begin position="239"/>
        <end position="241"/>
    </location>
    <ligand>
        <name>ATP</name>
        <dbReference type="ChEBI" id="CHEBI:30616"/>
    </ligand>
</feature>
<feature type="binding site" evidence="1">
    <location>
        <position position="352"/>
    </location>
    <ligand>
        <name>L-glutamine</name>
        <dbReference type="ChEBI" id="CHEBI:58359"/>
    </ligand>
</feature>
<feature type="binding site" evidence="1">
    <location>
        <begin position="380"/>
        <end position="383"/>
    </location>
    <ligand>
        <name>L-glutamine</name>
        <dbReference type="ChEBI" id="CHEBI:58359"/>
    </ligand>
</feature>
<feature type="binding site" evidence="1">
    <location>
        <position position="403"/>
    </location>
    <ligand>
        <name>L-glutamine</name>
        <dbReference type="ChEBI" id="CHEBI:58359"/>
    </ligand>
</feature>
<feature type="binding site" evidence="1">
    <location>
        <position position="470"/>
    </location>
    <ligand>
        <name>L-glutamine</name>
        <dbReference type="ChEBI" id="CHEBI:58359"/>
    </ligand>
</feature>
<evidence type="ECO:0000255" key="1">
    <source>
        <dbReference type="HAMAP-Rule" id="MF_01227"/>
    </source>
</evidence>
<gene>
    <name evidence="1" type="primary">pyrG</name>
    <name type="ordered locus">ECS88_3048</name>
</gene>
<sequence length="545" mass="60374">MTTNYIFVTGGVVSSLGKGIAAASLAAILEARGLNVTIMKLDPYINVDPGTMSPIQHGEVFVTEDGAETDLDLGHYERFIRTKMSRRNNFTTGRIYSDVLRKERRGDYLGATVQVIPHITNAIKERVLEGGEGHDVVLVEIGGTVGDIESLPFLEAIRQMAVEIGREHTLFMHLTLVPYMAASGEVKTKPTQHSVKELLSIGIQPDILICRSDRAVPANERAKIALFCNVPEKAVISLKDVDSIYKIPGLLKSQGLDDYICKRFSLNCPEANLSEWEQVIFEEANPVSEVTIGMVGKYIELPDAYKSVIEALKHGGLKNRVSVNIKLIDSQDVETRGVEILKGLDAILVPGGFGYRGVEGMITTARFARENNIPYLGICLGMQVALIDYARHVANMENANSTEFVPDCKYPVVALITEWRDENGNVEVRSEKSDLGGTMRLGAQQCQLVDDSLVRQLYNAPTIVERHRHRYEVNNMLLKQIEDAGLRVAGRSGDDQLVEIIEVPNHPWFVACQFHPEFTSTPRDGHPLFAGFVKAASEFQKRQAK</sequence>
<keyword id="KW-0067">ATP-binding</keyword>
<keyword id="KW-0315">Glutamine amidotransferase</keyword>
<keyword id="KW-0436">Ligase</keyword>
<keyword id="KW-0460">Magnesium</keyword>
<keyword id="KW-0479">Metal-binding</keyword>
<keyword id="KW-0547">Nucleotide-binding</keyword>
<keyword id="KW-0665">Pyrimidine biosynthesis</keyword>
<keyword id="KW-1185">Reference proteome</keyword>
<comment type="function">
    <text evidence="1">Catalyzes the ATP-dependent amination of UTP to CTP with either L-glutamine or ammonia as the source of nitrogen. Regulates intracellular CTP levels through interactions with the four ribonucleotide triphosphates.</text>
</comment>
<comment type="catalytic activity">
    <reaction evidence="1">
        <text>UTP + L-glutamine + ATP + H2O = CTP + L-glutamate + ADP + phosphate + 2 H(+)</text>
        <dbReference type="Rhea" id="RHEA:26426"/>
        <dbReference type="ChEBI" id="CHEBI:15377"/>
        <dbReference type="ChEBI" id="CHEBI:15378"/>
        <dbReference type="ChEBI" id="CHEBI:29985"/>
        <dbReference type="ChEBI" id="CHEBI:30616"/>
        <dbReference type="ChEBI" id="CHEBI:37563"/>
        <dbReference type="ChEBI" id="CHEBI:43474"/>
        <dbReference type="ChEBI" id="CHEBI:46398"/>
        <dbReference type="ChEBI" id="CHEBI:58359"/>
        <dbReference type="ChEBI" id="CHEBI:456216"/>
        <dbReference type="EC" id="6.3.4.2"/>
    </reaction>
</comment>
<comment type="catalytic activity">
    <reaction evidence="1">
        <text>L-glutamine + H2O = L-glutamate + NH4(+)</text>
        <dbReference type="Rhea" id="RHEA:15889"/>
        <dbReference type="ChEBI" id="CHEBI:15377"/>
        <dbReference type="ChEBI" id="CHEBI:28938"/>
        <dbReference type="ChEBI" id="CHEBI:29985"/>
        <dbReference type="ChEBI" id="CHEBI:58359"/>
    </reaction>
</comment>
<comment type="catalytic activity">
    <reaction evidence="1">
        <text>UTP + NH4(+) + ATP = CTP + ADP + phosphate + 2 H(+)</text>
        <dbReference type="Rhea" id="RHEA:16597"/>
        <dbReference type="ChEBI" id="CHEBI:15378"/>
        <dbReference type="ChEBI" id="CHEBI:28938"/>
        <dbReference type="ChEBI" id="CHEBI:30616"/>
        <dbReference type="ChEBI" id="CHEBI:37563"/>
        <dbReference type="ChEBI" id="CHEBI:43474"/>
        <dbReference type="ChEBI" id="CHEBI:46398"/>
        <dbReference type="ChEBI" id="CHEBI:456216"/>
    </reaction>
</comment>
<comment type="activity regulation">
    <text evidence="1">Allosterically activated by GTP, when glutamine is the substrate; GTP has no effect on the reaction when ammonia is the substrate. The allosteric effector GTP functions by stabilizing the protein conformation that binds the tetrahedral intermediate(s) formed during glutamine hydrolysis. Inhibited by the product CTP, via allosteric rather than competitive inhibition.</text>
</comment>
<comment type="pathway">
    <text evidence="1">Pyrimidine metabolism; CTP biosynthesis via de novo pathway; CTP from UDP: step 2/2.</text>
</comment>
<comment type="subunit">
    <text evidence="1">Homotetramer.</text>
</comment>
<comment type="miscellaneous">
    <text evidence="1">CTPSs have evolved a hybrid strategy for distinguishing between UTP and CTP. The overlapping regions of the product feedback inhibitory and substrate sites recognize a common feature in both compounds, the triphosphate moiety. To differentiate isosteric substrate and product pyrimidine rings, an additional pocket far from the expected kinase/ligase catalytic site, specifically recognizes the cytosine and ribose portions of the product inhibitor.</text>
</comment>
<comment type="similarity">
    <text evidence="1">Belongs to the CTP synthase family.</text>
</comment>
<reference key="1">
    <citation type="journal article" date="2009" name="PLoS Genet.">
        <title>Organised genome dynamics in the Escherichia coli species results in highly diverse adaptive paths.</title>
        <authorList>
            <person name="Touchon M."/>
            <person name="Hoede C."/>
            <person name="Tenaillon O."/>
            <person name="Barbe V."/>
            <person name="Baeriswyl S."/>
            <person name="Bidet P."/>
            <person name="Bingen E."/>
            <person name="Bonacorsi S."/>
            <person name="Bouchier C."/>
            <person name="Bouvet O."/>
            <person name="Calteau A."/>
            <person name="Chiapello H."/>
            <person name="Clermont O."/>
            <person name="Cruveiller S."/>
            <person name="Danchin A."/>
            <person name="Diard M."/>
            <person name="Dossat C."/>
            <person name="Karoui M.E."/>
            <person name="Frapy E."/>
            <person name="Garry L."/>
            <person name="Ghigo J.M."/>
            <person name="Gilles A.M."/>
            <person name="Johnson J."/>
            <person name="Le Bouguenec C."/>
            <person name="Lescat M."/>
            <person name="Mangenot S."/>
            <person name="Martinez-Jehanne V."/>
            <person name="Matic I."/>
            <person name="Nassif X."/>
            <person name="Oztas S."/>
            <person name="Petit M.A."/>
            <person name="Pichon C."/>
            <person name="Rouy Z."/>
            <person name="Ruf C.S."/>
            <person name="Schneider D."/>
            <person name="Tourret J."/>
            <person name="Vacherie B."/>
            <person name="Vallenet D."/>
            <person name="Medigue C."/>
            <person name="Rocha E.P.C."/>
            <person name="Denamur E."/>
        </authorList>
    </citation>
    <scope>NUCLEOTIDE SEQUENCE [LARGE SCALE GENOMIC DNA]</scope>
    <source>
        <strain>S88 / ExPEC</strain>
    </source>
</reference>
<name>PYRG_ECO45</name>
<protein>
    <recommendedName>
        <fullName evidence="1">CTP synthase</fullName>
        <ecNumber evidence="1">6.3.4.2</ecNumber>
    </recommendedName>
    <alternativeName>
        <fullName evidence="1">Cytidine 5'-triphosphate synthase</fullName>
    </alternativeName>
    <alternativeName>
        <fullName evidence="1">Cytidine triphosphate synthetase</fullName>
        <shortName evidence="1">CTP synthetase</shortName>
        <shortName evidence="1">CTPS</shortName>
    </alternativeName>
    <alternativeName>
        <fullName evidence="1">UTP--ammonia ligase</fullName>
    </alternativeName>
</protein>
<proteinExistence type="inferred from homology"/>
<dbReference type="EC" id="6.3.4.2" evidence="1"/>
<dbReference type="EMBL" id="CU928161">
    <property type="protein sequence ID" value="CAR04290.1"/>
    <property type="molecule type" value="Genomic_DNA"/>
</dbReference>
<dbReference type="RefSeq" id="WP_000210878.1">
    <property type="nucleotide sequence ID" value="NC_011742.1"/>
</dbReference>
<dbReference type="EMDB" id="EMD-8475"/>
<dbReference type="EMDB" id="EMD-8504"/>
<dbReference type="EMDB" id="EMD-8513"/>
<dbReference type="SMR" id="B7MLA1"/>
<dbReference type="MEROPS" id="C26.964"/>
<dbReference type="GeneID" id="93779218"/>
<dbReference type="KEGG" id="ecz:ECS88_3048"/>
<dbReference type="HOGENOM" id="CLU_011675_5_0_6"/>
<dbReference type="UniPathway" id="UPA00159">
    <property type="reaction ID" value="UER00277"/>
</dbReference>
<dbReference type="Proteomes" id="UP000000747">
    <property type="component" value="Chromosome"/>
</dbReference>
<dbReference type="GO" id="GO:0005829">
    <property type="term" value="C:cytosol"/>
    <property type="evidence" value="ECO:0007669"/>
    <property type="project" value="TreeGrafter"/>
</dbReference>
<dbReference type="GO" id="GO:0005524">
    <property type="term" value="F:ATP binding"/>
    <property type="evidence" value="ECO:0007669"/>
    <property type="project" value="UniProtKB-KW"/>
</dbReference>
<dbReference type="GO" id="GO:0003883">
    <property type="term" value="F:CTP synthase activity"/>
    <property type="evidence" value="ECO:0007669"/>
    <property type="project" value="UniProtKB-UniRule"/>
</dbReference>
<dbReference type="GO" id="GO:0004359">
    <property type="term" value="F:glutaminase activity"/>
    <property type="evidence" value="ECO:0007669"/>
    <property type="project" value="RHEA"/>
</dbReference>
<dbReference type="GO" id="GO:0042802">
    <property type="term" value="F:identical protein binding"/>
    <property type="evidence" value="ECO:0007669"/>
    <property type="project" value="TreeGrafter"/>
</dbReference>
<dbReference type="GO" id="GO:0046872">
    <property type="term" value="F:metal ion binding"/>
    <property type="evidence" value="ECO:0007669"/>
    <property type="project" value="UniProtKB-KW"/>
</dbReference>
<dbReference type="GO" id="GO:0044210">
    <property type="term" value="P:'de novo' CTP biosynthetic process"/>
    <property type="evidence" value="ECO:0007669"/>
    <property type="project" value="UniProtKB-UniRule"/>
</dbReference>
<dbReference type="GO" id="GO:0019856">
    <property type="term" value="P:pyrimidine nucleobase biosynthetic process"/>
    <property type="evidence" value="ECO:0007669"/>
    <property type="project" value="TreeGrafter"/>
</dbReference>
<dbReference type="CDD" id="cd03113">
    <property type="entry name" value="CTPS_N"/>
    <property type="match status" value="1"/>
</dbReference>
<dbReference type="CDD" id="cd01746">
    <property type="entry name" value="GATase1_CTP_Synthase"/>
    <property type="match status" value="1"/>
</dbReference>
<dbReference type="FunFam" id="3.40.50.300:FF:000009">
    <property type="entry name" value="CTP synthase"/>
    <property type="match status" value="1"/>
</dbReference>
<dbReference type="FunFam" id="3.40.50.880:FF:000002">
    <property type="entry name" value="CTP synthase"/>
    <property type="match status" value="1"/>
</dbReference>
<dbReference type="Gene3D" id="3.40.50.880">
    <property type="match status" value="1"/>
</dbReference>
<dbReference type="Gene3D" id="3.40.50.300">
    <property type="entry name" value="P-loop containing nucleotide triphosphate hydrolases"/>
    <property type="match status" value="1"/>
</dbReference>
<dbReference type="HAMAP" id="MF_01227">
    <property type="entry name" value="PyrG"/>
    <property type="match status" value="1"/>
</dbReference>
<dbReference type="InterPro" id="IPR029062">
    <property type="entry name" value="Class_I_gatase-like"/>
</dbReference>
<dbReference type="InterPro" id="IPR004468">
    <property type="entry name" value="CTP_synthase"/>
</dbReference>
<dbReference type="InterPro" id="IPR017456">
    <property type="entry name" value="CTP_synthase_N"/>
</dbReference>
<dbReference type="InterPro" id="IPR017926">
    <property type="entry name" value="GATASE"/>
</dbReference>
<dbReference type="InterPro" id="IPR033828">
    <property type="entry name" value="GATase1_CTP_Synthase"/>
</dbReference>
<dbReference type="InterPro" id="IPR027417">
    <property type="entry name" value="P-loop_NTPase"/>
</dbReference>
<dbReference type="NCBIfam" id="NF003792">
    <property type="entry name" value="PRK05380.1"/>
    <property type="match status" value="1"/>
</dbReference>
<dbReference type="NCBIfam" id="TIGR00337">
    <property type="entry name" value="PyrG"/>
    <property type="match status" value="1"/>
</dbReference>
<dbReference type="PANTHER" id="PTHR11550">
    <property type="entry name" value="CTP SYNTHASE"/>
    <property type="match status" value="1"/>
</dbReference>
<dbReference type="PANTHER" id="PTHR11550:SF0">
    <property type="entry name" value="CTP SYNTHASE-RELATED"/>
    <property type="match status" value="1"/>
</dbReference>
<dbReference type="Pfam" id="PF06418">
    <property type="entry name" value="CTP_synth_N"/>
    <property type="match status" value="1"/>
</dbReference>
<dbReference type="Pfam" id="PF00117">
    <property type="entry name" value="GATase"/>
    <property type="match status" value="1"/>
</dbReference>
<dbReference type="SUPFAM" id="SSF52317">
    <property type="entry name" value="Class I glutamine amidotransferase-like"/>
    <property type="match status" value="1"/>
</dbReference>
<dbReference type="SUPFAM" id="SSF52540">
    <property type="entry name" value="P-loop containing nucleoside triphosphate hydrolases"/>
    <property type="match status" value="1"/>
</dbReference>
<dbReference type="PROSITE" id="PS51273">
    <property type="entry name" value="GATASE_TYPE_1"/>
    <property type="match status" value="1"/>
</dbReference>